<gene>
    <name evidence="1" type="primary">abhd12</name>
    <name type="ORF">si:ch211-79l10.2</name>
    <name evidence="7" type="ORF">zgc:153367</name>
</gene>
<name>ABD12_DANRE</name>
<reference key="1">
    <citation type="submission" date="2006-09" db="EMBL/GenBank/DDBJ databases">
        <authorList>
            <consortium name="NIH - Zebrafish Gene Collection (ZGC) project"/>
        </authorList>
    </citation>
    <scope>NUCLEOTIDE SEQUENCE [LARGE SCALE MRNA]</scope>
    <source>
        <tissue>Ovary</tissue>
    </source>
</reference>
<reference key="2">
    <citation type="journal article" date="2013" name="Nature">
        <title>The zebrafish reference genome sequence and its relationship to the human genome.</title>
        <authorList>
            <person name="Howe K."/>
            <person name="Clark M.D."/>
            <person name="Torroja C.F."/>
            <person name="Torrance J."/>
            <person name="Berthelot C."/>
            <person name="Muffato M."/>
            <person name="Collins J.E."/>
            <person name="Humphray S."/>
            <person name="McLaren K."/>
            <person name="Matthews L."/>
            <person name="McLaren S."/>
            <person name="Sealy I."/>
            <person name="Caccamo M."/>
            <person name="Churcher C."/>
            <person name="Scott C."/>
            <person name="Barrett J.C."/>
            <person name="Koch R."/>
            <person name="Rauch G.J."/>
            <person name="White S."/>
            <person name="Chow W."/>
            <person name="Kilian B."/>
            <person name="Quintais L.T."/>
            <person name="Guerra-Assuncao J.A."/>
            <person name="Zhou Y."/>
            <person name="Gu Y."/>
            <person name="Yen J."/>
            <person name="Vogel J.H."/>
            <person name="Eyre T."/>
            <person name="Redmond S."/>
            <person name="Banerjee R."/>
            <person name="Chi J."/>
            <person name="Fu B."/>
            <person name="Langley E."/>
            <person name="Maguire S.F."/>
            <person name="Laird G.K."/>
            <person name="Lloyd D."/>
            <person name="Kenyon E."/>
            <person name="Donaldson S."/>
            <person name="Sehra H."/>
            <person name="Almeida-King J."/>
            <person name="Loveland J."/>
            <person name="Trevanion S."/>
            <person name="Jones M."/>
            <person name="Quail M."/>
            <person name="Willey D."/>
            <person name="Hunt A."/>
            <person name="Burton J."/>
            <person name="Sims S."/>
            <person name="McLay K."/>
            <person name="Plumb B."/>
            <person name="Davis J."/>
            <person name="Clee C."/>
            <person name="Oliver K."/>
            <person name="Clark R."/>
            <person name="Riddle C."/>
            <person name="Elliot D."/>
            <person name="Threadgold G."/>
            <person name="Harden G."/>
            <person name="Ware D."/>
            <person name="Begum S."/>
            <person name="Mortimore B."/>
            <person name="Kerry G."/>
            <person name="Heath P."/>
            <person name="Phillimore B."/>
            <person name="Tracey A."/>
            <person name="Corby N."/>
            <person name="Dunn M."/>
            <person name="Johnson C."/>
            <person name="Wood J."/>
            <person name="Clark S."/>
            <person name="Pelan S."/>
            <person name="Griffiths G."/>
            <person name="Smith M."/>
            <person name="Glithero R."/>
            <person name="Howden P."/>
            <person name="Barker N."/>
            <person name="Lloyd C."/>
            <person name="Stevens C."/>
            <person name="Harley J."/>
            <person name="Holt K."/>
            <person name="Panagiotidis G."/>
            <person name="Lovell J."/>
            <person name="Beasley H."/>
            <person name="Henderson C."/>
            <person name="Gordon D."/>
            <person name="Auger K."/>
            <person name="Wright D."/>
            <person name="Collins J."/>
            <person name="Raisen C."/>
            <person name="Dyer L."/>
            <person name="Leung K."/>
            <person name="Robertson L."/>
            <person name="Ambridge K."/>
            <person name="Leongamornlert D."/>
            <person name="McGuire S."/>
            <person name="Gilderthorp R."/>
            <person name="Griffiths C."/>
            <person name="Manthravadi D."/>
            <person name="Nichol S."/>
            <person name="Barker G."/>
            <person name="Whitehead S."/>
            <person name="Kay M."/>
            <person name="Brown J."/>
            <person name="Murnane C."/>
            <person name="Gray E."/>
            <person name="Humphries M."/>
            <person name="Sycamore N."/>
            <person name="Barker D."/>
            <person name="Saunders D."/>
            <person name="Wallis J."/>
            <person name="Babbage A."/>
            <person name="Hammond S."/>
            <person name="Mashreghi-Mohammadi M."/>
            <person name="Barr L."/>
            <person name="Martin S."/>
            <person name="Wray P."/>
            <person name="Ellington A."/>
            <person name="Matthews N."/>
            <person name="Ellwood M."/>
            <person name="Woodmansey R."/>
            <person name="Clark G."/>
            <person name="Cooper J."/>
            <person name="Tromans A."/>
            <person name="Grafham D."/>
            <person name="Skuce C."/>
            <person name="Pandian R."/>
            <person name="Andrews R."/>
            <person name="Harrison E."/>
            <person name="Kimberley A."/>
            <person name="Garnett J."/>
            <person name="Fosker N."/>
            <person name="Hall R."/>
            <person name="Garner P."/>
            <person name="Kelly D."/>
            <person name="Bird C."/>
            <person name="Palmer S."/>
            <person name="Gehring I."/>
            <person name="Berger A."/>
            <person name="Dooley C.M."/>
            <person name="Ersan-Urun Z."/>
            <person name="Eser C."/>
            <person name="Geiger H."/>
            <person name="Geisler M."/>
            <person name="Karotki L."/>
            <person name="Kirn A."/>
            <person name="Konantz J."/>
            <person name="Konantz M."/>
            <person name="Oberlander M."/>
            <person name="Rudolph-Geiger S."/>
            <person name="Teucke M."/>
            <person name="Lanz C."/>
            <person name="Raddatz G."/>
            <person name="Osoegawa K."/>
            <person name="Zhu B."/>
            <person name="Rapp A."/>
            <person name="Widaa S."/>
            <person name="Langford C."/>
            <person name="Yang F."/>
            <person name="Schuster S.C."/>
            <person name="Carter N.P."/>
            <person name="Harrow J."/>
            <person name="Ning Z."/>
            <person name="Herrero J."/>
            <person name="Searle S.M."/>
            <person name="Enright A."/>
            <person name="Geisler R."/>
            <person name="Plasterk R.H."/>
            <person name="Lee C."/>
            <person name="Westerfield M."/>
            <person name="de Jong P.J."/>
            <person name="Zon L.I."/>
            <person name="Postlethwait J.H."/>
            <person name="Nusslein-Volhard C."/>
            <person name="Hubbard T.J."/>
            <person name="Roest Crollius H."/>
            <person name="Rogers J."/>
            <person name="Stemple D.L."/>
        </authorList>
    </citation>
    <scope>NUCLEOTIDE SEQUENCE [LARGE SCALE GENOMIC DNA] OF 93-371</scope>
    <source>
        <strain>Tuebingen</strain>
    </source>
</reference>
<reference key="3">
    <citation type="journal article" date="2017" name="Neurobiol. Dis.">
        <title>Functional validation of ABHD12 mutations in the neurodegenerative disease PHARC.</title>
        <authorList>
            <person name="Tingaud-Sequeira A."/>
            <person name="Raldua D."/>
            <person name="Lavie J."/>
            <person name="Mathieu G."/>
            <person name="Bordier M."/>
            <person name="Knoll-Gellida A."/>
            <person name="Rambeau P."/>
            <person name="Coupry I."/>
            <person name="Andre M."/>
            <person name="Malm E."/>
            <person name="Moeller C."/>
            <person name="Andreasson S."/>
            <person name="Rendtorff N.D."/>
            <person name="Tranebjaerg L."/>
            <person name="Koenig M."/>
            <person name="Lacombe D."/>
            <person name="Goizet C."/>
            <person name="Babin P.J."/>
        </authorList>
    </citation>
    <scope>TISSUE SPECIFICITY</scope>
    <scope>DEVELOPMENTAL STAGE</scope>
    <scope>DISRUPTION PHENOTYPE</scope>
</reference>
<keyword id="KW-0256">Endoplasmic reticulum</keyword>
<keyword id="KW-0325">Glycoprotein</keyword>
<keyword id="KW-0378">Hydrolase</keyword>
<keyword id="KW-0443">Lipid metabolism</keyword>
<keyword id="KW-0472">Membrane</keyword>
<keyword id="KW-1185">Reference proteome</keyword>
<keyword id="KW-0812">Transmembrane</keyword>
<keyword id="KW-1133">Transmembrane helix</keyword>
<sequence length="382" mass="43285">MRKRKGSADHDSSFTATLTDGSSDLKQCHKGTDADTDPGGSGKEMGRRCRRGGLMWRLRRILIWLLGIYIAIPVIIKVCPSIQAKLVFLNFVRVPYFIDLKRPQDQGMNHTHNFYLQPEEGINIGVWHTVPAGMWREAQAKDAEWYEKSFQSSHPVILYLHGNAGTRGGDHRVQLYKVLSSLGYHVVTFDYRGWGDSEGSPSERGMTSDALFLYQWIKQRIGPKPLYIWGHSLGTGVATNLVRRLCDRGTPPDALILESPFTNIREEAKSHPFSMVYRYLPGFDWFFLDAISANDIRFASDENVNHISCPVLILHAEDDTVVPFQLGKKLYDLAAQSKSLNGHKVQFIPFSSSLGYRHKFIYKSPQLPNILSDFLRAPHPHG</sequence>
<evidence type="ECO:0000250" key="1">
    <source>
        <dbReference type="UniProtKB" id="Q8N2K0"/>
    </source>
</evidence>
<evidence type="ECO:0000250" key="2">
    <source>
        <dbReference type="UniProtKB" id="Q99LR1"/>
    </source>
</evidence>
<evidence type="ECO:0000255" key="3"/>
<evidence type="ECO:0000255" key="4">
    <source>
        <dbReference type="PROSITE-ProRule" id="PRU00498"/>
    </source>
</evidence>
<evidence type="ECO:0000256" key="5">
    <source>
        <dbReference type="SAM" id="MobiDB-lite"/>
    </source>
</evidence>
<evidence type="ECO:0000269" key="6">
    <source>
    </source>
</evidence>
<evidence type="ECO:0000303" key="7">
    <source ref="1"/>
</evidence>
<evidence type="ECO:0000305" key="8"/>
<proteinExistence type="evidence at transcript level"/>
<dbReference type="EC" id="3.1.-.-" evidence="1"/>
<dbReference type="EC" id="3.1.1.23" evidence="1"/>
<dbReference type="EMBL" id="BC124330">
    <property type="protein sequence ID" value="AAI24331.1"/>
    <property type="molecule type" value="mRNA"/>
</dbReference>
<dbReference type="EMBL" id="AL953905">
    <property type="protein sequence ID" value="CAQ15102.1"/>
    <property type="molecule type" value="Genomic_DNA"/>
</dbReference>
<dbReference type="RefSeq" id="NP_001070065.1">
    <property type="nucleotide sequence ID" value="NM_001076597.1"/>
</dbReference>
<dbReference type="SMR" id="Q08C93"/>
<dbReference type="FunCoup" id="Q08C93">
    <property type="interactions" value="1306"/>
</dbReference>
<dbReference type="STRING" id="7955.ENSDARP00000095479"/>
<dbReference type="ESTHER" id="danre-q08c93">
    <property type="family name" value="ABHD12-PHARC"/>
</dbReference>
<dbReference type="GlyCosmos" id="Q08C93">
    <property type="glycosylation" value="1 site, No reported glycans"/>
</dbReference>
<dbReference type="PaxDb" id="7955-ENSDARP00000095479"/>
<dbReference type="Ensembl" id="ENSDART00000104708">
    <property type="protein sequence ID" value="ENSDARP00000095479"/>
    <property type="gene ID" value="ENSDARG00000071004"/>
</dbReference>
<dbReference type="GeneID" id="767657"/>
<dbReference type="KEGG" id="dre:767657"/>
<dbReference type="AGR" id="ZFIN:ZDB-GENE-060929-268"/>
<dbReference type="CTD" id="26090"/>
<dbReference type="ZFIN" id="ZDB-GENE-060929-268">
    <property type="gene designation" value="abhd12"/>
</dbReference>
<dbReference type="eggNOG" id="KOG1552">
    <property type="taxonomic scope" value="Eukaryota"/>
</dbReference>
<dbReference type="HOGENOM" id="CLU_029375_1_0_1"/>
<dbReference type="InParanoid" id="Q08C93"/>
<dbReference type="OMA" id="YELHNCL"/>
<dbReference type="OrthoDB" id="10249433at2759"/>
<dbReference type="PhylomeDB" id="Q08C93"/>
<dbReference type="TreeFam" id="TF315122"/>
<dbReference type="Reactome" id="R-DRE-426048">
    <property type="pathway name" value="Arachidonate production from DAG"/>
</dbReference>
<dbReference type="PRO" id="PR:Q08C93"/>
<dbReference type="Proteomes" id="UP000000437">
    <property type="component" value="Alternate scaffold 17"/>
</dbReference>
<dbReference type="Proteomes" id="UP000000437">
    <property type="component" value="Chromosome 17"/>
</dbReference>
<dbReference type="Bgee" id="ENSDARG00000071004">
    <property type="expression patterns" value="Expressed in swim bladder and 36 other cell types or tissues"/>
</dbReference>
<dbReference type="ExpressionAtlas" id="Q08C93">
    <property type="expression patterns" value="baseline"/>
</dbReference>
<dbReference type="GO" id="GO:0005789">
    <property type="term" value="C:endoplasmic reticulum membrane"/>
    <property type="evidence" value="ECO:0000250"/>
    <property type="project" value="UniProtKB"/>
</dbReference>
<dbReference type="GO" id="GO:0016020">
    <property type="term" value="C:membrane"/>
    <property type="evidence" value="ECO:0000250"/>
    <property type="project" value="UniProtKB"/>
</dbReference>
<dbReference type="GO" id="GO:0004622">
    <property type="term" value="F:lysophospholipase activity"/>
    <property type="evidence" value="ECO:0000250"/>
    <property type="project" value="UniProtKB"/>
</dbReference>
<dbReference type="GO" id="GO:0047372">
    <property type="term" value="F:monoacylglycerol lipase activity"/>
    <property type="evidence" value="ECO:0000250"/>
    <property type="project" value="UniProtKB"/>
</dbReference>
<dbReference type="GO" id="GO:0004620">
    <property type="term" value="F:phospholipase activity"/>
    <property type="evidence" value="ECO:0000250"/>
    <property type="project" value="UniProtKB"/>
</dbReference>
<dbReference type="GO" id="GO:0046464">
    <property type="term" value="P:acylglycerol catabolic process"/>
    <property type="evidence" value="ECO:0000250"/>
    <property type="project" value="UniProtKB"/>
</dbReference>
<dbReference type="GO" id="GO:0048899">
    <property type="term" value="P:anterior lateral line development"/>
    <property type="evidence" value="ECO:0000315"/>
    <property type="project" value="ZFIN"/>
</dbReference>
<dbReference type="GO" id="GO:0043010">
    <property type="term" value="P:camera-type eye development"/>
    <property type="evidence" value="ECO:0000315"/>
    <property type="project" value="ZFIN"/>
</dbReference>
<dbReference type="GO" id="GO:0052651">
    <property type="term" value="P:monoacylglycerol catabolic process"/>
    <property type="evidence" value="ECO:0000250"/>
    <property type="project" value="UniProtKB"/>
</dbReference>
<dbReference type="GO" id="GO:0042552">
    <property type="term" value="P:myelination"/>
    <property type="evidence" value="ECO:0000315"/>
    <property type="project" value="ZFIN"/>
</dbReference>
<dbReference type="GO" id="GO:0006660">
    <property type="term" value="P:phosphatidylserine catabolic process"/>
    <property type="evidence" value="ECO:0000250"/>
    <property type="project" value="UniProtKB"/>
</dbReference>
<dbReference type="GO" id="GO:0009395">
    <property type="term" value="P:phospholipid catabolic process"/>
    <property type="evidence" value="ECO:0000250"/>
    <property type="project" value="UniProtKB"/>
</dbReference>
<dbReference type="GO" id="GO:0048919">
    <property type="term" value="P:posterior lateral line neuromast development"/>
    <property type="evidence" value="ECO:0000315"/>
    <property type="project" value="ZFIN"/>
</dbReference>
<dbReference type="GO" id="GO:0010842">
    <property type="term" value="P:retina layer formation"/>
    <property type="evidence" value="ECO:0000315"/>
    <property type="project" value="ZFIN"/>
</dbReference>
<dbReference type="GO" id="GO:0036269">
    <property type="term" value="P:swimming behavior"/>
    <property type="evidence" value="ECO:0000315"/>
    <property type="project" value="ZFIN"/>
</dbReference>
<dbReference type="FunFam" id="3.40.50.1820:FF:000069">
    <property type="entry name" value="monoacylglycerol lipase ABHD12"/>
    <property type="match status" value="1"/>
</dbReference>
<dbReference type="Gene3D" id="3.40.50.1820">
    <property type="entry name" value="alpha/beta hydrolase"/>
    <property type="match status" value="1"/>
</dbReference>
<dbReference type="InterPro" id="IPR000073">
    <property type="entry name" value="AB_hydrolase_1"/>
</dbReference>
<dbReference type="InterPro" id="IPR029058">
    <property type="entry name" value="AB_hydrolase_fold"/>
</dbReference>
<dbReference type="PANTHER" id="PTHR12277">
    <property type="entry name" value="ALPHA/BETA HYDROLASE DOMAIN-CONTAINING PROTEIN"/>
    <property type="match status" value="1"/>
</dbReference>
<dbReference type="PANTHER" id="PTHR12277:SF61">
    <property type="entry name" value="LYSOPHOSPHATIDYLSERINE LIPASE ABHD12"/>
    <property type="match status" value="1"/>
</dbReference>
<dbReference type="Pfam" id="PF00561">
    <property type="entry name" value="Abhydrolase_1"/>
    <property type="match status" value="1"/>
</dbReference>
<dbReference type="SUPFAM" id="SSF53474">
    <property type="entry name" value="alpha/beta-Hydrolases"/>
    <property type="match status" value="1"/>
</dbReference>
<comment type="function">
    <text evidence="1 2">Lysophosphatidylserine (LPS) lipase that mediates the hydrolysis of lysophosphatidylserine, a class of signaling lipids that regulates immunological and neurological processes (By similarity). Represents a major lysophosphatidylserine lipase in the brain, thereby playing a key role in the central nervous system (By similarity). Also able to hydrolyze oxidized phosphatidylserine; oxidized phosphatidylserine is produced in response to severe inflammatory stress and constitutes a proapoptotic 'eat me' signal. Also has monoacylglycerol (MAG) lipase activity: hydrolyzes 2-arachidonoylglycerol (2-AG), thereby acting as a regulator of endocannabinoid signaling pathways. Has a strong preference for very-long-chain lipid substrates; substrate specificity is likely due to improved catalysis and not improved substrate binding (By similarity).</text>
</comment>
<comment type="catalytic activity">
    <reaction evidence="1">
        <text>1-(9Z-octadecenoyl)-sn-glycero-3-phospho-L-serine + H2O = sn-glycero-3-phospho-L-serine + (9Z)-octadecenoate + H(+)</text>
        <dbReference type="Rhea" id="RHEA:40499"/>
        <dbReference type="ChEBI" id="CHEBI:15377"/>
        <dbReference type="ChEBI" id="CHEBI:15378"/>
        <dbReference type="ChEBI" id="CHEBI:30823"/>
        <dbReference type="ChEBI" id="CHEBI:64765"/>
        <dbReference type="ChEBI" id="CHEBI:74617"/>
    </reaction>
</comment>
<comment type="catalytic activity">
    <reaction evidence="2">
        <text>1-(9Z-octadecenoyl)-sn-glycero-3-phospho-(1'-sn-glycerol) + H2O = sn-glycero-3-phospho-(1'-sn-glycerol) + (9Z)-octadecenoate + H(+)</text>
        <dbReference type="Rhea" id="RHEA:44584"/>
        <dbReference type="ChEBI" id="CHEBI:15377"/>
        <dbReference type="ChEBI" id="CHEBI:15378"/>
        <dbReference type="ChEBI" id="CHEBI:30823"/>
        <dbReference type="ChEBI" id="CHEBI:64717"/>
        <dbReference type="ChEBI" id="CHEBI:72828"/>
    </reaction>
</comment>
<comment type="catalytic activity">
    <reaction evidence="2">
        <text>1-(9Z-octadecenoyl)-sn-glycero-3-phospho-(1D-myo-inositol) + H2O = sn-glycero-3-phospho-1D-myo-inositol + (9Z)-octadecenoate + H(+)</text>
        <dbReference type="Rhea" id="RHEA:44588"/>
        <dbReference type="ChEBI" id="CHEBI:15377"/>
        <dbReference type="ChEBI" id="CHEBI:15378"/>
        <dbReference type="ChEBI" id="CHEBI:30823"/>
        <dbReference type="ChEBI" id="CHEBI:58444"/>
        <dbReference type="ChEBI" id="CHEBI:78762"/>
    </reaction>
</comment>
<comment type="catalytic activity">
    <reaction evidence="2">
        <text>1-(9Z-octadecenoyl)-sn-glycero-3-phosphoethanolamine + H2O = sn-glycero-3-phosphoethanolamine + (9Z)-octadecenoate + H(+)</text>
        <dbReference type="Rhea" id="RHEA:40895"/>
        <dbReference type="ChEBI" id="CHEBI:15377"/>
        <dbReference type="ChEBI" id="CHEBI:15378"/>
        <dbReference type="ChEBI" id="CHEBI:30823"/>
        <dbReference type="ChEBI" id="CHEBI:74971"/>
        <dbReference type="ChEBI" id="CHEBI:143890"/>
    </reaction>
</comment>
<comment type="catalytic activity">
    <reaction evidence="2">
        <text>1-(9Z-octadecenoyl)-sn-glycero-3-phosphocholine + H2O = 1-(9Z-octadecenoyl)-sn-glycerol + phosphocholine + H(+)</text>
        <dbReference type="Rhea" id="RHEA:41091"/>
        <dbReference type="ChEBI" id="CHEBI:15377"/>
        <dbReference type="ChEBI" id="CHEBI:15378"/>
        <dbReference type="ChEBI" id="CHEBI:28610"/>
        <dbReference type="ChEBI" id="CHEBI:75757"/>
        <dbReference type="ChEBI" id="CHEBI:295975"/>
    </reaction>
</comment>
<comment type="catalytic activity">
    <reaction evidence="1">
        <text>2-(9Z-octadecenoyl)-glycerol + H2O = glycerol + (9Z)-octadecenoate + H(+)</text>
        <dbReference type="Rhea" id="RHEA:38491"/>
        <dbReference type="ChEBI" id="CHEBI:15377"/>
        <dbReference type="ChEBI" id="CHEBI:15378"/>
        <dbReference type="ChEBI" id="CHEBI:17754"/>
        <dbReference type="ChEBI" id="CHEBI:30823"/>
        <dbReference type="ChEBI" id="CHEBI:73990"/>
    </reaction>
</comment>
<comment type="catalytic activity">
    <reaction evidence="1">
        <text>1-hexadecanoyl-sn-glycero-3-phospho-L-serine + H2O = sn-glycero-3-phospho-L-serine + hexadecanoate + H(+)</text>
        <dbReference type="Rhea" id="RHEA:44552"/>
        <dbReference type="ChEBI" id="CHEBI:7896"/>
        <dbReference type="ChEBI" id="CHEBI:15377"/>
        <dbReference type="ChEBI" id="CHEBI:15378"/>
        <dbReference type="ChEBI" id="CHEBI:64765"/>
        <dbReference type="ChEBI" id="CHEBI:75020"/>
    </reaction>
</comment>
<comment type="catalytic activity">
    <reaction evidence="1">
        <text>2-(5Z,8Z,11Z,14Z-eicosatetraenoyl)-glycerol + H2O = glycerol + (5Z,8Z,11Z,14Z)-eicosatetraenoate + H(+)</text>
        <dbReference type="Rhea" id="RHEA:26132"/>
        <dbReference type="ChEBI" id="CHEBI:15377"/>
        <dbReference type="ChEBI" id="CHEBI:15378"/>
        <dbReference type="ChEBI" id="CHEBI:17754"/>
        <dbReference type="ChEBI" id="CHEBI:32395"/>
        <dbReference type="ChEBI" id="CHEBI:52392"/>
    </reaction>
</comment>
<comment type="catalytic activity">
    <reaction evidence="1">
        <text>Hydrolyzes glycerol monoesters of long-chain fatty acids.</text>
        <dbReference type="EC" id="3.1.1.23"/>
    </reaction>
</comment>
<comment type="catalytic activity">
    <reaction evidence="1">
        <text>1-decanoylglycerol + H2O = decanoate + glycerol + H(+)</text>
        <dbReference type="Rhea" id="RHEA:44320"/>
        <dbReference type="ChEBI" id="CHEBI:15377"/>
        <dbReference type="ChEBI" id="CHEBI:15378"/>
        <dbReference type="ChEBI" id="CHEBI:17754"/>
        <dbReference type="ChEBI" id="CHEBI:27689"/>
        <dbReference type="ChEBI" id="CHEBI:75547"/>
    </reaction>
</comment>
<comment type="catalytic activity">
    <reaction evidence="1">
        <text>1-dodecanoylglycerol + H2O = dodecanoate + glycerol + H(+)</text>
        <dbReference type="Rhea" id="RHEA:44316"/>
        <dbReference type="ChEBI" id="CHEBI:15377"/>
        <dbReference type="ChEBI" id="CHEBI:15378"/>
        <dbReference type="ChEBI" id="CHEBI:17754"/>
        <dbReference type="ChEBI" id="CHEBI:18262"/>
        <dbReference type="ChEBI" id="CHEBI:75539"/>
    </reaction>
</comment>
<comment type="catalytic activity">
    <reaction evidence="1">
        <text>1-tetradecanoylglycerol + H2O = tetradecanoate + glycerol + H(+)</text>
        <dbReference type="Rhea" id="RHEA:44312"/>
        <dbReference type="ChEBI" id="CHEBI:15377"/>
        <dbReference type="ChEBI" id="CHEBI:15378"/>
        <dbReference type="ChEBI" id="CHEBI:17754"/>
        <dbReference type="ChEBI" id="CHEBI:30807"/>
        <dbReference type="ChEBI" id="CHEBI:75562"/>
    </reaction>
</comment>
<comment type="catalytic activity">
    <reaction evidence="1">
        <text>2-hexadecanoylglycerol + H2O = glycerol + hexadecanoate + H(+)</text>
        <dbReference type="Rhea" id="RHEA:39963"/>
        <dbReference type="ChEBI" id="CHEBI:7896"/>
        <dbReference type="ChEBI" id="CHEBI:15377"/>
        <dbReference type="ChEBI" id="CHEBI:15378"/>
        <dbReference type="ChEBI" id="CHEBI:17754"/>
        <dbReference type="ChEBI" id="CHEBI:75455"/>
    </reaction>
</comment>
<comment type="catalytic activity">
    <reaction evidence="1">
        <text>1-(9Z-octadecenoyl)-glycerol + H2O = glycerol + (9Z)-octadecenoate + H(+)</text>
        <dbReference type="Rhea" id="RHEA:38487"/>
        <dbReference type="ChEBI" id="CHEBI:15377"/>
        <dbReference type="ChEBI" id="CHEBI:15378"/>
        <dbReference type="ChEBI" id="CHEBI:17754"/>
        <dbReference type="ChEBI" id="CHEBI:30823"/>
        <dbReference type="ChEBI" id="CHEBI:75342"/>
    </reaction>
</comment>
<comment type="catalytic activity">
    <reaction evidence="1">
        <text>2-(9Z,12Z-octadecadienoyl)-glycerol + H2O = (9Z,12Z)-octadecadienoate + glycerol + H(+)</text>
        <dbReference type="Rhea" id="RHEA:44732"/>
        <dbReference type="ChEBI" id="CHEBI:15377"/>
        <dbReference type="ChEBI" id="CHEBI:15378"/>
        <dbReference type="ChEBI" id="CHEBI:17754"/>
        <dbReference type="ChEBI" id="CHEBI:30245"/>
        <dbReference type="ChEBI" id="CHEBI:75457"/>
    </reaction>
</comment>
<comment type="catalytic activity">
    <reaction evidence="1">
        <text>1-(5Z,8Z,11Z,14Z-eicosatetraenoyl)-glycerol + H2O = glycerol + (5Z,8Z,11Z,14Z)-eicosatetraenoate + H(+)</text>
        <dbReference type="Rhea" id="RHEA:44728"/>
        <dbReference type="ChEBI" id="CHEBI:15377"/>
        <dbReference type="ChEBI" id="CHEBI:15378"/>
        <dbReference type="ChEBI" id="CHEBI:17754"/>
        <dbReference type="ChEBI" id="CHEBI:32395"/>
        <dbReference type="ChEBI" id="CHEBI:75612"/>
    </reaction>
</comment>
<comment type="catalytic activity">
    <reaction evidence="1">
        <text>1-(9Z,12Z-octadecadienoyl)-glycerol + H2O = (9Z,12Z)-octadecadienoate + glycerol + H(+)</text>
        <dbReference type="Rhea" id="RHEA:48428"/>
        <dbReference type="ChEBI" id="CHEBI:15377"/>
        <dbReference type="ChEBI" id="CHEBI:15378"/>
        <dbReference type="ChEBI" id="CHEBI:17754"/>
        <dbReference type="ChEBI" id="CHEBI:30245"/>
        <dbReference type="ChEBI" id="CHEBI:75568"/>
    </reaction>
</comment>
<comment type="catalytic activity">
    <reaction evidence="1">
        <text>1-hexadecanoylglycerol + H2O = glycerol + hexadecanoate + H(+)</text>
        <dbReference type="Rhea" id="RHEA:39959"/>
        <dbReference type="ChEBI" id="CHEBI:7896"/>
        <dbReference type="ChEBI" id="CHEBI:15377"/>
        <dbReference type="ChEBI" id="CHEBI:15378"/>
        <dbReference type="ChEBI" id="CHEBI:17754"/>
        <dbReference type="ChEBI" id="CHEBI:69081"/>
    </reaction>
</comment>
<comment type="catalytic activity">
    <reaction evidence="1">
        <text>1-octadecanoylglycerol + H2O = octadecanoate + glycerol + H(+)</text>
        <dbReference type="Rhea" id="RHEA:38363"/>
        <dbReference type="ChEBI" id="CHEBI:15377"/>
        <dbReference type="ChEBI" id="CHEBI:15378"/>
        <dbReference type="ChEBI" id="CHEBI:17754"/>
        <dbReference type="ChEBI" id="CHEBI:25629"/>
        <dbReference type="ChEBI" id="CHEBI:75555"/>
    </reaction>
</comment>
<comment type="catalytic activity">
    <reaction evidence="1">
        <text>1-octadecanoyl-2-(9,10-epoxyoctadecanoyl)-sn-glycero-3-phospho-L-serine + H2O = 9,10-epoxyoctadecanoate + 1-octadecanoyl-sn-glycero-3-phosphoserine + H(+)</text>
        <dbReference type="Rhea" id="RHEA:59364"/>
        <dbReference type="ChEBI" id="CHEBI:15377"/>
        <dbReference type="ChEBI" id="CHEBI:15378"/>
        <dbReference type="ChEBI" id="CHEBI:84467"/>
        <dbReference type="ChEBI" id="CHEBI:85195"/>
        <dbReference type="ChEBI" id="CHEBI:143087"/>
    </reaction>
</comment>
<comment type="catalytic activity">
    <reaction evidence="1">
        <text>1-octadecanoyl-2-(10-hydroxyoctadecanoyl)-sn-glycero-3-phospho-L-serine + H2O = 1-octadecanoyl-sn-glycero-3-phosphoserine + 10-hydroxyoctadecanoate + H(+)</text>
        <dbReference type="Rhea" id="RHEA:59368"/>
        <dbReference type="ChEBI" id="CHEBI:15377"/>
        <dbReference type="ChEBI" id="CHEBI:15378"/>
        <dbReference type="ChEBI" id="CHEBI:84467"/>
        <dbReference type="ChEBI" id="CHEBI:143088"/>
        <dbReference type="ChEBI" id="CHEBI:143089"/>
    </reaction>
</comment>
<comment type="catalytic activity">
    <reaction evidence="1">
        <text>1-hexadecanoyl-2-(10-hydroxyoctadecanoyl)-sn-glycero-3-phospho-L-serine + H2O = 10-hydroxyoctadecanoate + 1-hexadecanoyl-sn-glycero-3-phospho-L-serine + H(+)</text>
        <dbReference type="Rhea" id="RHEA:59372"/>
        <dbReference type="ChEBI" id="CHEBI:15377"/>
        <dbReference type="ChEBI" id="CHEBI:15378"/>
        <dbReference type="ChEBI" id="CHEBI:75020"/>
        <dbReference type="ChEBI" id="CHEBI:143089"/>
        <dbReference type="ChEBI" id="CHEBI:143094"/>
    </reaction>
</comment>
<comment type="subcellular location">
    <subcellularLocation>
        <location evidence="1">Endoplasmic reticulum membrane</location>
        <topology evidence="3">Single-pass membrane protein</topology>
    </subcellularLocation>
</comment>
<comment type="tissue specificity">
    <text evidence="6">Ubiquitously expressed in adult tissues.</text>
</comment>
<comment type="developmental stage">
    <text evidence="6">Expressed both maternally and zygotically.</text>
</comment>
<comment type="disruption phenotype">
    <text evidence="6">Morpholino knockdown of the protein causes myelination defects and functional deficits, characterized by progressive ataxia and motor skill impairment (PubMed:27890673). A disruption of retina architecture and retinotectal projections is observed, together with an inhibition of lens clarification and a low number of mechanosensory hair cells in the inner ear and lateral line system (PubMed:27890673).</text>
</comment>
<comment type="similarity">
    <text evidence="8">Belongs to the serine esterase family.</text>
</comment>
<feature type="chain" id="PRO_0000375811" description="Lysophosphatidylserine lipase ABHD12">
    <location>
        <begin position="1"/>
        <end position="382"/>
    </location>
</feature>
<feature type="topological domain" description="Cytoplasmic" evidence="2">
    <location>
        <begin position="1"/>
        <end position="60"/>
    </location>
</feature>
<feature type="transmembrane region" description="Helical" evidence="2">
    <location>
        <begin position="61"/>
        <end position="81"/>
    </location>
</feature>
<feature type="topological domain" description="Extracellular" evidence="2">
    <location>
        <begin position="82"/>
        <end position="382"/>
    </location>
</feature>
<feature type="region of interest" description="Disordered" evidence="5">
    <location>
        <begin position="1"/>
        <end position="45"/>
    </location>
</feature>
<feature type="compositionally biased region" description="Basic and acidic residues" evidence="5">
    <location>
        <begin position="1"/>
        <end position="12"/>
    </location>
</feature>
<feature type="compositionally biased region" description="Polar residues" evidence="5">
    <location>
        <begin position="13"/>
        <end position="25"/>
    </location>
</feature>
<feature type="active site" description="Nucleophile" evidence="1">
    <location>
        <position position="232"/>
    </location>
</feature>
<feature type="active site" description="Charge relay system" evidence="1">
    <location>
        <position position="319"/>
    </location>
</feature>
<feature type="active site" description="Charge relay system" evidence="1">
    <location>
        <position position="358"/>
    </location>
</feature>
<feature type="glycosylation site" description="N-linked (GlcNAc...) asparagine" evidence="4">
    <location>
        <position position="109"/>
    </location>
</feature>
<accession>Q08C93</accession>
<accession>B0R177</accession>
<protein>
    <recommendedName>
        <fullName evidence="8">Lysophosphatidylserine lipase ABHD12</fullName>
        <ecNumber evidence="1">3.1.-.-</ecNumber>
    </recommendedName>
    <alternativeName>
        <fullName evidence="8">2-arachidonoylglycerol hydrolase ABHD12</fullName>
    </alternativeName>
    <alternativeName>
        <fullName evidence="8">Abhydrolase domain-containing protein 12</fullName>
    </alternativeName>
    <alternativeName>
        <fullName evidence="8">Monoacylglycerol lipase ABHD12</fullName>
        <ecNumber evidence="1">3.1.1.23</ecNumber>
    </alternativeName>
    <alternativeName>
        <fullName evidence="8">Oxidized phosphatidylserine lipase ABHD12</fullName>
        <ecNumber evidence="1">3.1.-.-</ecNumber>
    </alternativeName>
</protein>
<organism>
    <name type="scientific">Danio rerio</name>
    <name type="common">Zebrafish</name>
    <name type="synonym">Brachydanio rerio</name>
    <dbReference type="NCBI Taxonomy" id="7955"/>
    <lineage>
        <taxon>Eukaryota</taxon>
        <taxon>Metazoa</taxon>
        <taxon>Chordata</taxon>
        <taxon>Craniata</taxon>
        <taxon>Vertebrata</taxon>
        <taxon>Euteleostomi</taxon>
        <taxon>Actinopterygii</taxon>
        <taxon>Neopterygii</taxon>
        <taxon>Teleostei</taxon>
        <taxon>Ostariophysi</taxon>
        <taxon>Cypriniformes</taxon>
        <taxon>Danionidae</taxon>
        <taxon>Danioninae</taxon>
        <taxon>Danio</taxon>
    </lineage>
</organism>